<feature type="chain" id="PRO_0000068986" description="5-hydroxytryptamine receptor">
    <location>
        <begin position="1"/>
        <end position="466"/>
    </location>
</feature>
<feature type="topological domain" description="Extracellular" evidence="1">
    <location>
        <begin position="1"/>
        <end position="66"/>
    </location>
</feature>
<feature type="transmembrane region" description="Helical; Name=1" evidence="1">
    <location>
        <begin position="67"/>
        <end position="89"/>
    </location>
</feature>
<feature type="topological domain" description="Cytoplasmic" evidence="1">
    <location>
        <begin position="90"/>
        <end position="99"/>
    </location>
</feature>
<feature type="transmembrane region" description="Helical; Name=2" evidence="1">
    <location>
        <begin position="100"/>
        <end position="121"/>
    </location>
</feature>
<feature type="topological domain" description="Extracellular" evidence="1">
    <location>
        <begin position="122"/>
        <end position="136"/>
    </location>
</feature>
<feature type="transmembrane region" description="Helical; Name=3" evidence="1">
    <location>
        <begin position="137"/>
        <end position="158"/>
    </location>
</feature>
<feature type="topological domain" description="Cytoplasmic" evidence="1">
    <location>
        <begin position="159"/>
        <end position="177"/>
    </location>
</feature>
<feature type="transmembrane region" description="Helical; Name=4" evidence="1">
    <location>
        <begin position="178"/>
        <end position="200"/>
    </location>
</feature>
<feature type="topological domain" description="Extracellular" evidence="1">
    <location>
        <begin position="201"/>
        <end position="228"/>
    </location>
</feature>
<feature type="transmembrane region" description="Helical; Name=5" evidence="1">
    <location>
        <begin position="229"/>
        <end position="250"/>
    </location>
</feature>
<feature type="topological domain" description="Cytoplasmic" evidence="1">
    <location>
        <begin position="251"/>
        <end position="386"/>
    </location>
</feature>
<feature type="transmembrane region" description="Helical; Name=6" evidence="1">
    <location>
        <begin position="387"/>
        <end position="410"/>
    </location>
</feature>
<feature type="topological domain" description="Extracellular" evidence="1">
    <location>
        <begin position="411"/>
        <end position="419"/>
    </location>
</feature>
<feature type="transmembrane region" description="Helical; Name=7" evidence="1">
    <location>
        <begin position="420"/>
        <end position="442"/>
    </location>
</feature>
<feature type="topological domain" description="Cytoplasmic" evidence="1">
    <location>
        <begin position="443"/>
        <end position="466"/>
    </location>
</feature>
<feature type="region of interest" description="Disordered" evidence="4">
    <location>
        <begin position="1"/>
        <end position="21"/>
    </location>
</feature>
<feature type="region of interest" description="Disordered" evidence="4">
    <location>
        <begin position="255"/>
        <end position="282"/>
    </location>
</feature>
<feature type="region of interest" description="Disordered" evidence="4">
    <location>
        <begin position="339"/>
        <end position="360"/>
    </location>
</feature>
<feature type="compositionally biased region" description="Polar residues" evidence="4">
    <location>
        <begin position="10"/>
        <end position="21"/>
    </location>
</feature>
<feature type="compositionally biased region" description="Low complexity" evidence="4">
    <location>
        <begin position="339"/>
        <end position="353"/>
    </location>
</feature>
<feature type="glycosylation site" description="N-linked (GlcNAc...) asparagine" evidence="2">
    <location>
        <position position="2"/>
    </location>
</feature>
<feature type="glycosylation site" description="N-linked (GlcNAc...) asparagine" evidence="2">
    <location>
        <position position="10"/>
    </location>
</feature>
<feature type="glycosylation site" description="N-linked (GlcNAc...) asparagine" evidence="2">
    <location>
        <position position="29"/>
    </location>
</feature>
<feature type="glycosylation site" description="N-linked (GlcNAc...) asparagine" evidence="2">
    <location>
        <position position="41"/>
    </location>
</feature>
<feature type="glycosylation site" description="N-linked (GlcNAc...) asparagine" evidence="2">
    <location>
        <position position="45"/>
    </location>
</feature>
<feature type="glycosylation site" description="N-linked (GlcNAc...) asparagine" evidence="2">
    <location>
        <position position="50"/>
    </location>
</feature>
<feature type="disulfide bond" evidence="3">
    <location>
        <begin position="135"/>
        <end position="215"/>
    </location>
</feature>
<reference key="1">
    <citation type="journal article" date="1996" name="Insect Biochem. Mol. Biol.">
        <title>Cloning of biogenic amine receptors from moths (Bombyx mori and Heliothis virescens).</title>
        <authorList>
            <person name="von Nickisch-Rosenegk E."/>
            <person name="Krieger J."/>
            <person name="Kubick S."/>
            <person name="Laage R."/>
            <person name="Strobel J."/>
            <person name="Strotmann J."/>
            <person name="Breer H."/>
        </authorList>
    </citation>
    <scope>NUCLEOTIDE SEQUENCE [MRNA]</scope>
    <source>
        <tissue>Antenna</tissue>
    </source>
</reference>
<accession>Q25190</accession>
<comment type="function">
    <text evidence="1">This is a receptor for 5-hydroxytryptamine (serotonin), a biogenic hormone that function as a neurotransmitter, a hormone, and a mitogen.</text>
</comment>
<comment type="subcellular location">
    <subcellularLocation>
        <location>Cell membrane</location>
        <topology>Multi-pass membrane protein</topology>
    </subcellularLocation>
</comment>
<comment type="similarity">
    <text evidence="3">Belongs to the G-protein coupled receptor 1 family.</text>
</comment>
<sequence>MNASRLPGFNDTSQDQPYPTSSEWFDGSNCSWVDAVSWGCNVTINGTSTNATSTDVTSFVLMAVTSVVLALIILATIVGNVFVIAAIIIERNLQNVANYLVASLAVADLMVACLVMPLGAVYEVSQGWILGPELCDMWTSSDVLCSSASILHLVAIATDRYWAVTDVDYIHIRNEKRIFTMIVLVWGAALVVSLAPQLGWKDPDYLARITQQQKCLVSQDLAYQIFATMSTFYVPLAVILILYWKIFQTARRRIRRRRDPPPPRPTSADGATPSGRPVQSARDRRFVKKRFLNLKKCNQRTRAETLAAALLLTEGQSTSTVDTLDEEPRTTAFTINEKVPPSVSPEKSSSTVTNGSKPERAIVPAPTHREKKESLEAKRERKAAKTLAIITGAFVFCWLPFFIMALVMPICQTCVISDYLASFFLWLGYFNSTLNPVIYTIFSPDFRQAFARILFGTHRRRRYKKF</sequence>
<keyword id="KW-1003">Cell membrane</keyword>
<keyword id="KW-1015">Disulfide bond</keyword>
<keyword id="KW-0297">G-protein coupled receptor</keyword>
<keyword id="KW-0325">Glycoprotein</keyword>
<keyword id="KW-0472">Membrane</keyword>
<keyword id="KW-0675">Receptor</keyword>
<keyword id="KW-0807">Transducer</keyword>
<keyword id="KW-0812">Transmembrane</keyword>
<keyword id="KW-1133">Transmembrane helix</keyword>
<proteinExistence type="evidence at transcript level"/>
<evidence type="ECO:0000250" key="1"/>
<evidence type="ECO:0000255" key="2"/>
<evidence type="ECO:0000255" key="3">
    <source>
        <dbReference type="PROSITE-ProRule" id="PRU00521"/>
    </source>
</evidence>
<evidence type="ECO:0000256" key="4">
    <source>
        <dbReference type="SAM" id="MobiDB-lite"/>
    </source>
</evidence>
<organism>
    <name type="scientific">Heliothis virescens</name>
    <name type="common">Tobacco budworm moth</name>
    <dbReference type="NCBI Taxonomy" id="7102"/>
    <lineage>
        <taxon>Eukaryota</taxon>
        <taxon>Metazoa</taxon>
        <taxon>Ecdysozoa</taxon>
        <taxon>Arthropoda</taxon>
        <taxon>Hexapoda</taxon>
        <taxon>Insecta</taxon>
        <taxon>Pterygota</taxon>
        <taxon>Neoptera</taxon>
        <taxon>Endopterygota</taxon>
        <taxon>Lepidoptera</taxon>
        <taxon>Glossata</taxon>
        <taxon>Ditrysia</taxon>
        <taxon>Noctuoidea</taxon>
        <taxon>Noctuidae</taxon>
        <taxon>Heliothinae</taxon>
        <taxon>Heliothis</taxon>
    </lineage>
</organism>
<protein>
    <recommendedName>
        <fullName>5-hydroxytryptamine receptor</fullName>
        <shortName>5-HT receptor</shortName>
    </recommendedName>
    <alternativeName>
        <fullName>Serotonin receptor</fullName>
    </alternativeName>
</protein>
<name>5HTR_HELVI</name>
<dbReference type="EMBL" id="X95605">
    <property type="protein sequence ID" value="CAA64863.1"/>
    <property type="molecule type" value="mRNA"/>
</dbReference>
<dbReference type="SMR" id="Q25190"/>
<dbReference type="GO" id="GO:0005886">
    <property type="term" value="C:plasma membrane"/>
    <property type="evidence" value="ECO:0007669"/>
    <property type="project" value="UniProtKB-SubCell"/>
</dbReference>
<dbReference type="GO" id="GO:0004930">
    <property type="term" value="F:G protein-coupled receptor activity"/>
    <property type="evidence" value="ECO:0007669"/>
    <property type="project" value="UniProtKB-KW"/>
</dbReference>
<dbReference type="GO" id="GO:0071880">
    <property type="term" value="P:adenylate cyclase-activating adrenergic receptor signaling pathway"/>
    <property type="evidence" value="ECO:0007669"/>
    <property type="project" value="TreeGrafter"/>
</dbReference>
<dbReference type="GO" id="GO:0043410">
    <property type="term" value="P:positive regulation of MAPK cascade"/>
    <property type="evidence" value="ECO:0007669"/>
    <property type="project" value="TreeGrafter"/>
</dbReference>
<dbReference type="CDD" id="cd15331">
    <property type="entry name" value="7tmA_5-HT1A_invertebrates"/>
    <property type="match status" value="1"/>
</dbReference>
<dbReference type="FunFam" id="1.20.1070.10:FF:000299">
    <property type="entry name" value="5-hydroxytryptamine receptor 2B"/>
    <property type="match status" value="1"/>
</dbReference>
<dbReference type="FunFam" id="1.20.1070.10:FF:000310">
    <property type="entry name" value="5-hydroxytryptamine receptor 2B"/>
    <property type="match status" value="1"/>
</dbReference>
<dbReference type="Gene3D" id="1.20.1070.10">
    <property type="entry name" value="Rhodopsin 7-helix transmembrane proteins"/>
    <property type="match status" value="1"/>
</dbReference>
<dbReference type="InterPro" id="IPR000276">
    <property type="entry name" value="GPCR_Rhodpsn"/>
</dbReference>
<dbReference type="InterPro" id="IPR017452">
    <property type="entry name" value="GPCR_Rhodpsn_7TM"/>
</dbReference>
<dbReference type="PANTHER" id="PTHR24248:SF200">
    <property type="entry name" value="5-HYDROXYTRYPTAMINE RECEPTOR 1B-LIKE ISOFORM X1"/>
    <property type="match status" value="1"/>
</dbReference>
<dbReference type="PANTHER" id="PTHR24248">
    <property type="entry name" value="ADRENERGIC RECEPTOR-RELATED G-PROTEIN COUPLED RECEPTOR"/>
    <property type="match status" value="1"/>
</dbReference>
<dbReference type="Pfam" id="PF00001">
    <property type="entry name" value="7tm_1"/>
    <property type="match status" value="1"/>
</dbReference>
<dbReference type="PRINTS" id="PR00237">
    <property type="entry name" value="GPCRRHODOPSN"/>
</dbReference>
<dbReference type="SMART" id="SM01381">
    <property type="entry name" value="7TM_GPCR_Srsx"/>
    <property type="match status" value="1"/>
</dbReference>
<dbReference type="SUPFAM" id="SSF81321">
    <property type="entry name" value="Family A G protein-coupled receptor-like"/>
    <property type="match status" value="1"/>
</dbReference>
<dbReference type="PROSITE" id="PS00237">
    <property type="entry name" value="G_PROTEIN_RECEP_F1_1"/>
    <property type="match status" value="1"/>
</dbReference>
<dbReference type="PROSITE" id="PS50262">
    <property type="entry name" value="G_PROTEIN_RECEP_F1_2"/>
    <property type="match status" value="1"/>
</dbReference>